<gene>
    <name evidence="10" type="primary">gcy-2</name>
    <name evidence="10" type="ORF">R134.2</name>
</gene>
<accession>Q10029</accession>
<keyword id="KW-1003">Cell membrane</keyword>
<keyword id="KW-0141">cGMP biosynthesis</keyword>
<keyword id="KW-0325">Glycoprotein</keyword>
<keyword id="KW-0342">GTP-binding</keyword>
<keyword id="KW-0456">Lyase</keyword>
<keyword id="KW-0472">Membrane</keyword>
<keyword id="KW-0547">Nucleotide-binding</keyword>
<keyword id="KW-0675">Receptor</keyword>
<keyword id="KW-1185">Reference proteome</keyword>
<keyword id="KW-0732">Signal</keyword>
<keyword id="KW-0812">Transmembrane</keyword>
<keyword id="KW-1133">Transmembrane helix</keyword>
<protein>
    <recommendedName>
        <fullName evidence="8">Receptor-type guanylate cyclase gcy-2</fullName>
        <ecNumber evidence="1">4.6.1.2</ecNumber>
    </recommendedName>
</protein>
<organism evidence="9">
    <name type="scientific">Caenorhabditis elegans</name>
    <dbReference type="NCBI Taxonomy" id="6239"/>
    <lineage>
        <taxon>Eukaryota</taxon>
        <taxon>Metazoa</taxon>
        <taxon>Ecdysozoa</taxon>
        <taxon>Nematoda</taxon>
        <taxon>Chromadorea</taxon>
        <taxon>Rhabditida</taxon>
        <taxon>Rhabditina</taxon>
        <taxon>Rhabditomorpha</taxon>
        <taxon>Rhabditoidea</taxon>
        <taxon>Rhabditidae</taxon>
        <taxon>Peloderinae</taxon>
        <taxon>Caenorhabditis</taxon>
    </lineage>
</organism>
<evidence type="ECO:0000250" key="1">
    <source>
        <dbReference type="UniProtKB" id="Q19187"/>
    </source>
</evidence>
<evidence type="ECO:0000255" key="2"/>
<evidence type="ECO:0000255" key="3">
    <source>
        <dbReference type="PROSITE-ProRule" id="PRU00099"/>
    </source>
</evidence>
<evidence type="ECO:0000255" key="4">
    <source>
        <dbReference type="PROSITE-ProRule" id="PRU00159"/>
    </source>
</evidence>
<evidence type="ECO:0000255" key="5">
    <source>
        <dbReference type="PROSITE-ProRule" id="PRU00498"/>
    </source>
</evidence>
<evidence type="ECO:0000256" key="6">
    <source>
        <dbReference type="SAM" id="MobiDB-lite"/>
    </source>
</evidence>
<evidence type="ECO:0000269" key="7">
    <source>
    </source>
</evidence>
<evidence type="ECO:0000305" key="8"/>
<evidence type="ECO:0000312" key="9">
    <source>
        <dbReference type="Proteomes" id="UP000001940"/>
    </source>
</evidence>
<evidence type="ECO:0000312" key="10">
    <source>
        <dbReference type="WormBase" id="R134.2"/>
    </source>
</evidence>
<dbReference type="EC" id="4.6.1.2" evidence="1"/>
<dbReference type="EMBL" id="BX284602">
    <property type="protein sequence ID" value="CAA88053.2"/>
    <property type="molecule type" value="Genomic_DNA"/>
</dbReference>
<dbReference type="PIR" id="T24214">
    <property type="entry name" value="T24214"/>
</dbReference>
<dbReference type="RefSeq" id="NP_496038.1">
    <property type="nucleotide sequence ID" value="NM_063637.1"/>
</dbReference>
<dbReference type="SMR" id="Q10029"/>
<dbReference type="FunCoup" id="Q10029">
    <property type="interactions" value="50"/>
</dbReference>
<dbReference type="STRING" id="6239.R134.2.1"/>
<dbReference type="GlyCosmos" id="Q10029">
    <property type="glycosylation" value="6 sites, No reported glycans"/>
</dbReference>
<dbReference type="PaxDb" id="6239-R134.2"/>
<dbReference type="WormBase" id="R134.2">
    <property type="protein sequence ID" value="CE25080"/>
    <property type="gene ID" value="WBGene00001529"/>
    <property type="gene designation" value="gcy-2"/>
</dbReference>
<dbReference type="eggNOG" id="KOG1023">
    <property type="taxonomic scope" value="Eukaryota"/>
</dbReference>
<dbReference type="HOGENOM" id="CLU_001072_1_3_1"/>
<dbReference type="InParanoid" id="Q10029"/>
<dbReference type="OMA" id="TVANERW"/>
<dbReference type="PhylomeDB" id="Q10029"/>
<dbReference type="Reactome" id="R-CEL-2514859">
    <property type="pathway name" value="Inactivation, recovery and regulation of the phototransduction cascade"/>
</dbReference>
<dbReference type="PRO" id="PR:Q10029"/>
<dbReference type="Proteomes" id="UP000001940">
    <property type="component" value="Chromosome II"/>
</dbReference>
<dbReference type="Bgee" id="WBGene00001529">
    <property type="expression patterns" value="Expressed in adult organism"/>
</dbReference>
<dbReference type="GO" id="GO:0005886">
    <property type="term" value="C:plasma membrane"/>
    <property type="evidence" value="ECO:0000318"/>
    <property type="project" value="GO_Central"/>
</dbReference>
<dbReference type="GO" id="GO:0005524">
    <property type="term" value="F:ATP binding"/>
    <property type="evidence" value="ECO:0007669"/>
    <property type="project" value="InterPro"/>
</dbReference>
<dbReference type="GO" id="GO:0005525">
    <property type="term" value="F:GTP binding"/>
    <property type="evidence" value="ECO:0007669"/>
    <property type="project" value="UniProtKB-KW"/>
</dbReference>
<dbReference type="GO" id="GO:0004383">
    <property type="term" value="F:guanylate cyclase activity"/>
    <property type="evidence" value="ECO:0000318"/>
    <property type="project" value="GO_Central"/>
</dbReference>
<dbReference type="GO" id="GO:0001653">
    <property type="term" value="F:peptide receptor activity"/>
    <property type="evidence" value="ECO:0000318"/>
    <property type="project" value="GO_Central"/>
</dbReference>
<dbReference type="GO" id="GO:0004672">
    <property type="term" value="F:protein kinase activity"/>
    <property type="evidence" value="ECO:0007669"/>
    <property type="project" value="InterPro"/>
</dbReference>
<dbReference type="GO" id="GO:0006182">
    <property type="term" value="P:cGMP biosynthetic process"/>
    <property type="evidence" value="ECO:0000318"/>
    <property type="project" value="GO_Central"/>
</dbReference>
<dbReference type="GO" id="GO:0035556">
    <property type="term" value="P:intracellular signal transduction"/>
    <property type="evidence" value="ECO:0007669"/>
    <property type="project" value="InterPro"/>
</dbReference>
<dbReference type="GO" id="GO:0007168">
    <property type="term" value="P:receptor guanylyl cyclase signaling pathway"/>
    <property type="evidence" value="ECO:0000318"/>
    <property type="project" value="GO_Central"/>
</dbReference>
<dbReference type="CDD" id="cd07302">
    <property type="entry name" value="CHD"/>
    <property type="match status" value="1"/>
</dbReference>
<dbReference type="CDD" id="cd06352">
    <property type="entry name" value="PBP1_NPR_GC-like"/>
    <property type="match status" value="1"/>
</dbReference>
<dbReference type="FunFam" id="3.30.70.1230:FF:000023">
    <property type="entry name" value="Guanylate cyclase"/>
    <property type="match status" value="1"/>
</dbReference>
<dbReference type="FunFam" id="3.40.50.2300:FF:000563">
    <property type="entry name" value="Receptor-type guanylate cyclase gcy-4"/>
    <property type="match status" value="1"/>
</dbReference>
<dbReference type="Gene3D" id="3.40.50.2300">
    <property type="match status" value="2"/>
</dbReference>
<dbReference type="Gene3D" id="6.10.250.780">
    <property type="match status" value="1"/>
</dbReference>
<dbReference type="Gene3D" id="3.30.70.1230">
    <property type="entry name" value="Nucleotide cyclase"/>
    <property type="match status" value="1"/>
</dbReference>
<dbReference type="Gene3D" id="1.10.510.10">
    <property type="entry name" value="Transferase(Phosphotransferase) domain 1"/>
    <property type="match status" value="1"/>
</dbReference>
<dbReference type="InterPro" id="IPR001054">
    <property type="entry name" value="A/G_cyclase"/>
</dbReference>
<dbReference type="InterPro" id="IPR018297">
    <property type="entry name" value="A/G_cyclase_CS"/>
</dbReference>
<dbReference type="InterPro" id="IPR001828">
    <property type="entry name" value="ANF_lig-bd_rcpt"/>
</dbReference>
<dbReference type="InterPro" id="IPR050401">
    <property type="entry name" value="Cyclic_nucleotide_synthase"/>
</dbReference>
<dbReference type="InterPro" id="IPR011009">
    <property type="entry name" value="Kinase-like_dom_sf"/>
</dbReference>
<dbReference type="InterPro" id="IPR029787">
    <property type="entry name" value="Nucleotide_cyclase"/>
</dbReference>
<dbReference type="InterPro" id="IPR028082">
    <property type="entry name" value="Peripla_BP_I"/>
</dbReference>
<dbReference type="InterPro" id="IPR000719">
    <property type="entry name" value="Prot_kinase_dom"/>
</dbReference>
<dbReference type="InterPro" id="IPR001245">
    <property type="entry name" value="Ser-Thr/Tyr_kinase_cat_dom"/>
</dbReference>
<dbReference type="PANTHER" id="PTHR11920">
    <property type="entry name" value="GUANYLYL CYCLASE"/>
    <property type="match status" value="1"/>
</dbReference>
<dbReference type="PANTHER" id="PTHR11920:SF265">
    <property type="entry name" value="RECEPTOR-TYPE GUANYLATE CYCLASE GCY-1-RELATED"/>
    <property type="match status" value="1"/>
</dbReference>
<dbReference type="Pfam" id="PF01094">
    <property type="entry name" value="ANF_receptor"/>
    <property type="match status" value="1"/>
</dbReference>
<dbReference type="Pfam" id="PF00211">
    <property type="entry name" value="Guanylate_cyc"/>
    <property type="match status" value="1"/>
</dbReference>
<dbReference type="Pfam" id="PF07714">
    <property type="entry name" value="PK_Tyr_Ser-Thr"/>
    <property type="match status" value="1"/>
</dbReference>
<dbReference type="SMART" id="SM00044">
    <property type="entry name" value="CYCc"/>
    <property type="match status" value="1"/>
</dbReference>
<dbReference type="SUPFAM" id="SSF55073">
    <property type="entry name" value="Nucleotide cyclase"/>
    <property type="match status" value="1"/>
</dbReference>
<dbReference type="SUPFAM" id="SSF53822">
    <property type="entry name" value="Periplasmic binding protein-like I"/>
    <property type="match status" value="1"/>
</dbReference>
<dbReference type="SUPFAM" id="SSF56112">
    <property type="entry name" value="Protein kinase-like (PK-like)"/>
    <property type="match status" value="1"/>
</dbReference>
<dbReference type="PROSITE" id="PS00452">
    <property type="entry name" value="GUANYLATE_CYCLASE_1"/>
    <property type="match status" value="1"/>
</dbReference>
<dbReference type="PROSITE" id="PS50125">
    <property type="entry name" value="GUANYLATE_CYCLASE_2"/>
    <property type="match status" value="1"/>
</dbReference>
<dbReference type="PROSITE" id="PS50011">
    <property type="entry name" value="PROTEIN_KINASE_DOM"/>
    <property type="match status" value="1"/>
</dbReference>
<comment type="function">
    <text evidence="1">Guanylate cyclase involved in the production of the second messenger cGMP (By similarity).</text>
</comment>
<comment type="catalytic activity">
    <reaction evidence="1">
        <text>GTP = 3',5'-cyclic GMP + diphosphate</text>
        <dbReference type="Rhea" id="RHEA:13665"/>
        <dbReference type="ChEBI" id="CHEBI:33019"/>
        <dbReference type="ChEBI" id="CHEBI:37565"/>
        <dbReference type="ChEBI" id="CHEBI:57746"/>
        <dbReference type="EC" id="4.6.1.2"/>
    </reaction>
</comment>
<comment type="subcellular location">
    <subcellularLocation>
        <location evidence="8">Cell membrane</location>
        <topology evidence="8">Single-pass type I membrane protein</topology>
    </subcellularLocation>
</comment>
<comment type="tissue specificity">
    <text evidence="7">Expressed bilaterally in AWA and ASI sensory neurons and in RIA and PVT interneurons.</text>
</comment>
<comment type="domain">
    <text evidence="4">The protein kinase domain is predicted to be catalytically inactive.</text>
</comment>
<comment type="similarity">
    <text evidence="3">Belongs to the adenylyl cyclase class-4/guanylyl cyclase family.</text>
</comment>
<proteinExistence type="evidence at transcript level"/>
<sequence>MVSSILKFVILIHSTFHSTFAQNLPDTTVAPKTKRTIKIGIAAAQRTQTSSIGWSVCGGAVPMAIERLREFGYVKDFDFEFIVDYTECDQGSVVRAGIEFIKTHKVDVIIGPPCAQALRVMSFLAENYKKPVLGWGFVSDTDLSDVIRFPYLTTVIPNSLMLGYAASKMLTVYNWGRVAMLYYYSDIKYCSGVMNDVEATFNNPSTPNVNIVIKAEIYLNDNETTDIVFQSVKSRARIIFWCTQTAIEKRDYLIKIATHDMIGDEYVHIMLSMRNIAFGAQTSLGKPTFSQSGLTPIWESFTEGTDDFEKMVKQAATRMFVLDVNSEVADKKYLDYLQKNIMKAVQSPPMNCSTVECMTANTTIMGGYARQLFDVVYLYGVALTNTNSTDPAVYDDVDVIVPQFVTSFQGMTGKVVISPNLTRMPIFQLYGLNSDYEQVALAEFTYIDPIMNVTLSYKEEGGAVWYFYGNSRPLDIPICGFLGKFCPISFWEQYMILAIVSISVIVLMVIIMIIGCLCVISAKHAEQARTNAEWQVPFVNLMESEKQIRSNATSRRSLQSAPSISTGHSGVTTVSDFCENYTMMMYEKEMVLTAKYQYTHLTKADKERFVKMRKLDHENINRFIGLSIDSAHFIAVTKLCSRGSLQDILSRGNFSMDYFFMFCIIRDVAKGLEYLHKTFLRLHGNLRSATCLVNDSWQVKLAEYGMDNLVEEQTPPKKRLLWVAPEVLRGSLSVSQMEPSADIYSFAIIASEILTKKEAWDILDRKEDCEALIALVKDCWAEVPEDRPTAENICSQMKGLVSKQKTNLMDHVFNMLEEYTSTLEEEIEERTKELTLEKKKADILLSRMLPKQVAERLKAGQTVEPEGFDSVTVFFSDVVKFTILASKCSPFQTVNLLNDLYSNFDTIIEQHGVYKVESIGDGYLCVSGLPTRNGYAHIKQIVDMSLKFMEYCRSFKIPHLPRENVELRIGVNSGPCVAGVVGLSMPRYCLFGDTVNTASRMESNGKPSLIHLTSDAHLLLLTHYPNHYDTSSRGEVIIKGKGVMETFWVHGRIDDIAEPTELRSICKPSTVANERWITPPAPKPEIRSVSSHGSRPPSVYDPLQDHRKFKMDTLKVAN</sequence>
<feature type="signal peptide" evidence="2">
    <location>
        <begin position="1"/>
        <end position="21"/>
    </location>
</feature>
<feature type="chain" id="PRO_0000433270" description="Receptor-type guanylate cyclase gcy-2" evidence="2">
    <location>
        <begin position="22"/>
        <end position="1118"/>
    </location>
</feature>
<feature type="topological domain" description="Extracellular" evidence="2">
    <location>
        <begin position="22"/>
        <end position="494"/>
    </location>
</feature>
<feature type="transmembrane region" description="Helical" evidence="2">
    <location>
        <begin position="495"/>
        <end position="515"/>
    </location>
</feature>
<feature type="topological domain" description="Cytoplasmic" evidence="2">
    <location>
        <begin position="516"/>
        <end position="1118"/>
    </location>
</feature>
<feature type="domain" description="Protein kinase" evidence="4">
    <location>
        <begin position="558"/>
        <end position="875"/>
    </location>
</feature>
<feature type="domain" description="Guanylate cyclase" evidence="3">
    <location>
        <begin position="872"/>
        <end position="1002"/>
    </location>
</feature>
<feature type="region of interest" description="Disordered" evidence="6">
    <location>
        <begin position="1076"/>
        <end position="1103"/>
    </location>
</feature>
<feature type="glycosylation site" description="N-linked (GlcNAc...) asparagine" evidence="5">
    <location>
        <position position="222"/>
    </location>
</feature>
<feature type="glycosylation site" description="N-linked (GlcNAc...) asparagine" evidence="5">
    <location>
        <position position="351"/>
    </location>
</feature>
<feature type="glycosylation site" description="N-linked (GlcNAc...) asparagine" evidence="5">
    <location>
        <position position="361"/>
    </location>
</feature>
<feature type="glycosylation site" description="N-linked (GlcNAc...) asparagine" evidence="5">
    <location>
        <position position="387"/>
    </location>
</feature>
<feature type="glycosylation site" description="N-linked (GlcNAc...) asparagine" evidence="5">
    <location>
        <position position="420"/>
    </location>
</feature>
<feature type="glycosylation site" description="N-linked (GlcNAc...) asparagine" evidence="5">
    <location>
        <position position="452"/>
    </location>
</feature>
<name>GCY2_CAEEL</name>
<reference evidence="9" key="1">
    <citation type="journal article" date="1998" name="Science">
        <title>Genome sequence of the nematode C. elegans: a platform for investigating biology.</title>
        <authorList>
            <consortium name="The C. elegans sequencing consortium"/>
        </authorList>
    </citation>
    <scope>NUCLEOTIDE SEQUENCE [LARGE SCALE GENOMIC DNA]</scope>
    <source>
        <strain evidence="9">Bristol N2</strain>
    </source>
</reference>
<reference evidence="8" key="2">
    <citation type="journal article" date="2006" name="Genetics">
        <title>Searching for neuronal left/right asymmetry: genomewide analysis of nematode receptor-type guanylyl cyclases.</title>
        <authorList>
            <person name="Ortiz C.O."/>
            <person name="Etchberger J.F."/>
            <person name="Posy S.L."/>
            <person name="Frokjaer-Jensen C."/>
            <person name="Lockery S."/>
            <person name="Honig B."/>
            <person name="Hobert O."/>
        </authorList>
    </citation>
    <scope>TISSUE SPECIFICITY</scope>
</reference>